<sequence length="213" mass="22678">MDTIWDISPPIAPATPVWPGDTPVGIERVWRIEAGSPVNVARITLSPHTGAHADAPLHYDAHGAPIGAVPLDAYLGRCRVIHCIGAHPVVSPDDVRAALADAPPRVLLRTYGQAPQRAWDSAFCAVAPQTIDLLAAHGVRLVGIDTPSLDPQESKTMDAHRRIRAHGMAILEGLVLDEIAAGDYELIALPLKFATLDASPVRAVLRALPDAPR</sequence>
<organism>
    <name type="scientific">Burkholderia thailandensis (strain ATCC 700388 / DSM 13276 / CCUG 48851 / CIP 106301 / E264)</name>
    <dbReference type="NCBI Taxonomy" id="271848"/>
    <lineage>
        <taxon>Bacteria</taxon>
        <taxon>Pseudomonadati</taxon>
        <taxon>Pseudomonadota</taxon>
        <taxon>Betaproteobacteria</taxon>
        <taxon>Burkholderiales</taxon>
        <taxon>Burkholderiaceae</taxon>
        <taxon>Burkholderia</taxon>
        <taxon>pseudomallei group</taxon>
    </lineage>
</organism>
<gene>
    <name evidence="1" type="primary">kynB</name>
    <name type="ordered locus">BTH_I0711</name>
</gene>
<evidence type="ECO:0000255" key="1">
    <source>
        <dbReference type="HAMAP-Rule" id="MF_01969"/>
    </source>
</evidence>
<evidence type="ECO:0000305" key="2"/>
<dbReference type="EC" id="3.5.1.9" evidence="1"/>
<dbReference type="EMBL" id="CP000086">
    <property type="protein sequence ID" value="ABC37937.1"/>
    <property type="status" value="ALT_INIT"/>
    <property type="molecule type" value="Genomic_DNA"/>
</dbReference>
<dbReference type="RefSeq" id="WP_009892702.1">
    <property type="nucleotide sequence ID" value="NZ_CP008785.1"/>
</dbReference>
<dbReference type="SMR" id="Q2T0N2"/>
<dbReference type="GeneID" id="45120467"/>
<dbReference type="KEGG" id="bte:BTH_I0711"/>
<dbReference type="HOGENOM" id="CLU_030671_3_1_4"/>
<dbReference type="UniPathway" id="UPA00333">
    <property type="reaction ID" value="UER00454"/>
</dbReference>
<dbReference type="Proteomes" id="UP000001930">
    <property type="component" value="Chromosome I"/>
</dbReference>
<dbReference type="GO" id="GO:0004061">
    <property type="term" value="F:arylformamidase activity"/>
    <property type="evidence" value="ECO:0000250"/>
    <property type="project" value="UniProtKB"/>
</dbReference>
<dbReference type="GO" id="GO:0004328">
    <property type="term" value="F:formamidase activity"/>
    <property type="evidence" value="ECO:0007669"/>
    <property type="project" value="InterPro"/>
</dbReference>
<dbReference type="GO" id="GO:0008270">
    <property type="term" value="F:zinc ion binding"/>
    <property type="evidence" value="ECO:0007669"/>
    <property type="project" value="UniProtKB-UniRule"/>
</dbReference>
<dbReference type="GO" id="GO:0043420">
    <property type="term" value="P:anthranilate metabolic process"/>
    <property type="evidence" value="ECO:0000250"/>
    <property type="project" value="UniProtKB"/>
</dbReference>
<dbReference type="GO" id="GO:0019441">
    <property type="term" value="P:L-tryptophan catabolic process to kynurenine"/>
    <property type="evidence" value="ECO:0000250"/>
    <property type="project" value="UniProtKB"/>
</dbReference>
<dbReference type="FunFam" id="3.50.30.50:FF:000001">
    <property type="entry name" value="Kynurenine formamidase"/>
    <property type="match status" value="1"/>
</dbReference>
<dbReference type="Gene3D" id="3.50.30.50">
    <property type="entry name" value="Putative cyclase"/>
    <property type="match status" value="1"/>
</dbReference>
<dbReference type="HAMAP" id="MF_01969">
    <property type="entry name" value="KynB"/>
    <property type="match status" value="1"/>
</dbReference>
<dbReference type="InterPro" id="IPR007325">
    <property type="entry name" value="KFase/CYL"/>
</dbReference>
<dbReference type="InterPro" id="IPR037175">
    <property type="entry name" value="KFase_sf"/>
</dbReference>
<dbReference type="InterPro" id="IPR017484">
    <property type="entry name" value="Kynurenine_formamidase_bac"/>
</dbReference>
<dbReference type="NCBIfam" id="TIGR03035">
    <property type="entry name" value="trp_arylform"/>
    <property type="match status" value="1"/>
</dbReference>
<dbReference type="PANTHER" id="PTHR31118">
    <property type="entry name" value="CYCLASE-LIKE PROTEIN 2"/>
    <property type="match status" value="1"/>
</dbReference>
<dbReference type="PANTHER" id="PTHR31118:SF32">
    <property type="entry name" value="KYNURENINE FORMAMIDASE"/>
    <property type="match status" value="1"/>
</dbReference>
<dbReference type="Pfam" id="PF04199">
    <property type="entry name" value="Cyclase"/>
    <property type="match status" value="1"/>
</dbReference>
<dbReference type="SUPFAM" id="SSF102198">
    <property type="entry name" value="Putative cyclase"/>
    <property type="match status" value="1"/>
</dbReference>
<keyword id="KW-0378">Hydrolase</keyword>
<keyword id="KW-0479">Metal-binding</keyword>
<keyword id="KW-0823">Tryptophan catabolism</keyword>
<keyword id="KW-0862">Zinc</keyword>
<comment type="function">
    <text evidence="1">Catalyzes the hydrolysis of N-formyl-L-kynurenine to L-kynurenine, the second step in the kynurenine pathway of tryptophan degradation.</text>
</comment>
<comment type="catalytic activity">
    <reaction evidence="1">
        <text>N-formyl-L-kynurenine + H2O = L-kynurenine + formate + H(+)</text>
        <dbReference type="Rhea" id="RHEA:13009"/>
        <dbReference type="ChEBI" id="CHEBI:15377"/>
        <dbReference type="ChEBI" id="CHEBI:15378"/>
        <dbReference type="ChEBI" id="CHEBI:15740"/>
        <dbReference type="ChEBI" id="CHEBI:57959"/>
        <dbReference type="ChEBI" id="CHEBI:58629"/>
        <dbReference type="EC" id="3.5.1.9"/>
    </reaction>
</comment>
<comment type="cofactor">
    <cofactor evidence="1">
        <name>Zn(2+)</name>
        <dbReference type="ChEBI" id="CHEBI:29105"/>
    </cofactor>
    <text evidence="1">Binds 2 zinc ions per subunit.</text>
</comment>
<comment type="pathway">
    <text evidence="1">Amino-acid degradation; L-tryptophan degradation via kynurenine pathway; L-kynurenine from L-tryptophan: step 2/2.</text>
</comment>
<comment type="subunit">
    <text evidence="1">Homodimer.</text>
</comment>
<comment type="similarity">
    <text evidence="1">Belongs to the Cyclase 1 superfamily. KynB family.</text>
</comment>
<comment type="sequence caution" evidence="2">
    <conflict type="erroneous initiation">
        <sequence resource="EMBL-CDS" id="ABC37937"/>
    </conflict>
</comment>
<reference key="1">
    <citation type="journal article" date="2005" name="BMC Genomics">
        <title>Bacterial genome adaptation to niches: divergence of the potential virulence genes in three Burkholderia species of different survival strategies.</title>
        <authorList>
            <person name="Kim H.S."/>
            <person name="Schell M.A."/>
            <person name="Yu Y."/>
            <person name="Ulrich R.L."/>
            <person name="Sarria S.H."/>
            <person name="Nierman W.C."/>
            <person name="DeShazer D."/>
        </authorList>
    </citation>
    <scope>NUCLEOTIDE SEQUENCE [LARGE SCALE GENOMIC DNA]</scope>
    <source>
        <strain>ATCC 700388 / DSM 13276 / CCUG 48851 / CIP 106301 / E264</strain>
    </source>
</reference>
<proteinExistence type="inferred from homology"/>
<protein>
    <recommendedName>
        <fullName evidence="1">Kynurenine formamidase</fullName>
        <shortName evidence="1">KFA</shortName>
        <shortName evidence="1">KFase</shortName>
        <ecNumber evidence="1">3.5.1.9</ecNumber>
    </recommendedName>
    <alternativeName>
        <fullName evidence="1">Arylformamidase</fullName>
    </alternativeName>
    <alternativeName>
        <fullName evidence="1">N-formylkynurenine formamidase</fullName>
        <shortName evidence="1">FKF</shortName>
    </alternativeName>
</protein>
<name>KYNB_BURTA</name>
<accession>Q2T0N2</accession>
<feature type="chain" id="PRO_0000362117" description="Kynurenine formamidase">
    <location>
        <begin position="1"/>
        <end position="213"/>
    </location>
</feature>
<feature type="active site" description="Proton donor/acceptor" evidence="1">
    <location>
        <position position="58"/>
    </location>
</feature>
<feature type="binding site" evidence="1">
    <location>
        <position position="18"/>
    </location>
    <ligand>
        <name>substrate</name>
    </ligand>
</feature>
<feature type="binding site" evidence="1">
    <location>
        <position position="48"/>
    </location>
    <ligand>
        <name>Zn(2+)</name>
        <dbReference type="ChEBI" id="CHEBI:29105"/>
        <label>1</label>
    </ligand>
</feature>
<feature type="binding site" evidence="1">
    <location>
        <position position="52"/>
    </location>
    <ligand>
        <name>Zn(2+)</name>
        <dbReference type="ChEBI" id="CHEBI:29105"/>
        <label>1</label>
    </ligand>
</feature>
<feature type="binding site" evidence="1">
    <location>
        <position position="54"/>
    </location>
    <ligand>
        <name>Zn(2+)</name>
        <dbReference type="ChEBI" id="CHEBI:29105"/>
        <label>1</label>
    </ligand>
</feature>
<feature type="binding site" evidence="1">
    <location>
        <position position="54"/>
    </location>
    <ligand>
        <name>Zn(2+)</name>
        <dbReference type="ChEBI" id="CHEBI:29105"/>
        <label>2</label>
    </ligand>
</feature>
<feature type="binding site" evidence="1">
    <location>
        <position position="160"/>
    </location>
    <ligand>
        <name>Zn(2+)</name>
        <dbReference type="ChEBI" id="CHEBI:29105"/>
        <label>2</label>
    </ligand>
</feature>
<feature type="binding site" evidence="1">
    <location>
        <position position="172"/>
    </location>
    <ligand>
        <name>Zn(2+)</name>
        <dbReference type="ChEBI" id="CHEBI:29105"/>
        <label>1</label>
    </ligand>
</feature>
<feature type="binding site" evidence="1">
    <location>
        <position position="172"/>
    </location>
    <ligand>
        <name>Zn(2+)</name>
        <dbReference type="ChEBI" id="CHEBI:29105"/>
        <label>2</label>
    </ligand>
</feature>